<gene>
    <name evidence="1" type="primary">rplJ</name>
    <name type="ordered locus">BDU_385</name>
</gene>
<sequence>MDKKINPKKVEMFNSLKEFLDGKDNIFFLDYRGLTVAELTKLRSRVEDEKGALKVVKNNIMKRVLKDKDIEGLDSYLLGPTAVVTAFDEANVIAKIFYEFVKTTTLKVKGGFVLGEVYDELKLSAYSKLPTKIESISLFMSVLKAPMSKLVRTLKALSDIKV</sequence>
<reference key="1">
    <citation type="journal article" date="2008" name="PLoS Genet.">
        <title>The genome of Borrelia recurrentis, the agent of deadly louse-borne relapsing fever, is a degraded subset of tick-borne Borrelia duttonii.</title>
        <authorList>
            <person name="Lescot M."/>
            <person name="Audic S."/>
            <person name="Robert C."/>
            <person name="Nguyen T.T."/>
            <person name="Blanc G."/>
            <person name="Cutler S.J."/>
            <person name="Wincker P."/>
            <person name="Couloux A."/>
            <person name="Claverie J.-M."/>
            <person name="Raoult D."/>
            <person name="Drancourt M."/>
        </authorList>
    </citation>
    <scope>NUCLEOTIDE SEQUENCE [LARGE SCALE GENOMIC DNA]</scope>
    <source>
        <strain>Ly</strain>
    </source>
</reference>
<accession>B5RLV1</accession>
<comment type="function">
    <text evidence="1">Forms part of the ribosomal stalk, playing a central role in the interaction of the ribosome with GTP-bound translation factors.</text>
</comment>
<comment type="subunit">
    <text evidence="1">Part of the ribosomal stalk of the 50S ribosomal subunit. The N-terminus interacts with L11 and the large rRNA to form the base of the stalk. The C-terminus forms an elongated spine to which L12 dimers bind in a sequential fashion forming a multimeric L10(L12)X complex.</text>
</comment>
<comment type="similarity">
    <text evidence="1">Belongs to the universal ribosomal protein uL10 family.</text>
</comment>
<protein>
    <recommendedName>
        <fullName evidence="1">Large ribosomal subunit protein uL10</fullName>
    </recommendedName>
    <alternativeName>
        <fullName evidence="2">50S ribosomal protein L10</fullName>
    </alternativeName>
</protein>
<organism>
    <name type="scientific">Borrelia duttonii (strain Ly)</name>
    <dbReference type="NCBI Taxonomy" id="412419"/>
    <lineage>
        <taxon>Bacteria</taxon>
        <taxon>Pseudomonadati</taxon>
        <taxon>Spirochaetota</taxon>
        <taxon>Spirochaetia</taxon>
        <taxon>Spirochaetales</taxon>
        <taxon>Borreliaceae</taxon>
        <taxon>Borrelia</taxon>
    </lineage>
</organism>
<evidence type="ECO:0000255" key="1">
    <source>
        <dbReference type="HAMAP-Rule" id="MF_00362"/>
    </source>
</evidence>
<evidence type="ECO:0000305" key="2"/>
<feature type="chain" id="PRO_1000120922" description="Large ribosomal subunit protein uL10">
    <location>
        <begin position="1"/>
        <end position="162"/>
    </location>
</feature>
<proteinExistence type="inferred from homology"/>
<name>RL10_BORDL</name>
<keyword id="KW-0687">Ribonucleoprotein</keyword>
<keyword id="KW-0689">Ribosomal protein</keyword>
<keyword id="KW-0694">RNA-binding</keyword>
<keyword id="KW-0699">rRNA-binding</keyword>
<dbReference type="EMBL" id="CP000976">
    <property type="protein sequence ID" value="ACH93337.1"/>
    <property type="molecule type" value="Genomic_DNA"/>
</dbReference>
<dbReference type="RefSeq" id="WP_012538148.1">
    <property type="nucleotide sequence ID" value="NC_011229.1"/>
</dbReference>
<dbReference type="SMR" id="B5RLV1"/>
<dbReference type="STRING" id="412419.BDU_385"/>
<dbReference type="KEGG" id="bdu:BDU_385"/>
<dbReference type="eggNOG" id="COG0244">
    <property type="taxonomic scope" value="Bacteria"/>
</dbReference>
<dbReference type="HOGENOM" id="CLU_092227_1_2_12"/>
<dbReference type="OrthoDB" id="9808307at2"/>
<dbReference type="Proteomes" id="UP000000611">
    <property type="component" value="Chromosome"/>
</dbReference>
<dbReference type="GO" id="GO:0015934">
    <property type="term" value="C:large ribosomal subunit"/>
    <property type="evidence" value="ECO:0007669"/>
    <property type="project" value="InterPro"/>
</dbReference>
<dbReference type="GO" id="GO:0070180">
    <property type="term" value="F:large ribosomal subunit rRNA binding"/>
    <property type="evidence" value="ECO:0007669"/>
    <property type="project" value="UniProtKB-UniRule"/>
</dbReference>
<dbReference type="GO" id="GO:0003735">
    <property type="term" value="F:structural constituent of ribosome"/>
    <property type="evidence" value="ECO:0007669"/>
    <property type="project" value="InterPro"/>
</dbReference>
<dbReference type="GO" id="GO:0006412">
    <property type="term" value="P:translation"/>
    <property type="evidence" value="ECO:0007669"/>
    <property type="project" value="UniProtKB-UniRule"/>
</dbReference>
<dbReference type="CDD" id="cd05797">
    <property type="entry name" value="Ribosomal_L10"/>
    <property type="match status" value="1"/>
</dbReference>
<dbReference type="Gene3D" id="3.30.70.1730">
    <property type="match status" value="1"/>
</dbReference>
<dbReference type="Gene3D" id="6.10.250.2350">
    <property type="match status" value="1"/>
</dbReference>
<dbReference type="HAMAP" id="MF_00362">
    <property type="entry name" value="Ribosomal_uL10"/>
    <property type="match status" value="1"/>
</dbReference>
<dbReference type="InterPro" id="IPR001790">
    <property type="entry name" value="Ribosomal_uL10"/>
</dbReference>
<dbReference type="InterPro" id="IPR043141">
    <property type="entry name" value="Ribosomal_uL10-like_sf"/>
</dbReference>
<dbReference type="InterPro" id="IPR022973">
    <property type="entry name" value="Ribosomal_uL10_bac"/>
</dbReference>
<dbReference type="InterPro" id="IPR047865">
    <property type="entry name" value="Ribosomal_uL10_bac_type"/>
</dbReference>
<dbReference type="InterPro" id="IPR002363">
    <property type="entry name" value="Ribosomal_uL10_CS_bac"/>
</dbReference>
<dbReference type="NCBIfam" id="NF000955">
    <property type="entry name" value="PRK00099.1-1"/>
    <property type="match status" value="1"/>
</dbReference>
<dbReference type="PANTHER" id="PTHR11560">
    <property type="entry name" value="39S RIBOSOMAL PROTEIN L10, MITOCHONDRIAL"/>
    <property type="match status" value="1"/>
</dbReference>
<dbReference type="Pfam" id="PF00466">
    <property type="entry name" value="Ribosomal_L10"/>
    <property type="match status" value="1"/>
</dbReference>
<dbReference type="SUPFAM" id="SSF160369">
    <property type="entry name" value="Ribosomal protein L10-like"/>
    <property type="match status" value="1"/>
</dbReference>
<dbReference type="PROSITE" id="PS01109">
    <property type="entry name" value="RIBOSOMAL_L10"/>
    <property type="match status" value="1"/>
</dbReference>